<gene>
    <name evidence="1" type="primary">dnaA</name>
    <name type="ordered locus">SAV_4316</name>
</gene>
<protein>
    <recommendedName>
        <fullName evidence="1">Chromosomal replication initiator protein DnaA</fullName>
    </recommendedName>
</protein>
<feature type="chain" id="PRO_0000114269" description="Chromosomal replication initiator protein DnaA">
    <location>
        <begin position="1"/>
        <end position="653"/>
    </location>
</feature>
<feature type="region of interest" description="Domain I, interacts with DnaA modulators" evidence="1">
    <location>
        <begin position="1"/>
        <end position="100"/>
    </location>
</feature>
<feature type="region of interest" description="Disordered" evidence="2">
    <location>
        <begin position="86"/>
        <end position="310"/>
    </location>
</feature>
<feature type="region of interest" description="Domain II" evidence="1">
    <location>
        <begin position="101"/>
        <end position="312"/>
    </location>
</feature>
<feature type="region of interest" description="Domain III, AAA+ region" evidence="1">
    <location>
        <begin position="313"/>
        <end position="529"/>
    </location>
</feature>
<feature type="region of interest" description="Domain IV, binds dsDNA" evidence="1">
    <location>
        <begin position="530"/>
        <end position="653"/>
    </location>
</feature>
<feature type="compositionally biased region" description="Basic and acidic residues" evidence="2">
    <location>
        <begin position="120"/>
        <end position="150"/>
    </location>
</feature>
<feature type="compositionally biased region" description="Basic and acidic residues" evidence="2">
    <location>
        <begin position="221"/>
        <end position="267"/>
    </location>
</feature>
<feature type="compositionally biased region" description="Low complexity" evidence="2">
    <location>
        <begin position="284"/>
        <end position="310"/>
    </location>
</feature>
<feature type="binding site" evidence="1">
    <location>
        <position position="357"/>
    </location>
    <ligand>
        <name>ATP</name>
        <dbReference type="ChEBI" id="CHEBI:30616"/>
    </ligand>
</feature>
<feature type="binding site" evidence="1">
    <location>
        <position position="359"/>
    </location>
    <ligand>
        <name>ATP</name>
        <dbReference type="ChEBI" id="CHEBI:30616"/>
    </ligand>
</feature>
<feature type="binding site" evidence="1">
    <location>
        <position position="360"/>
    </location>
    <ligand>
        <name>ATP</name>
        <dbReference type="ChEBI" id="CHEBI:30616"/>
    </ligand>
</feature>
<feature type="binding site" evidence="1">
    <location>
        <position position="361"/>
    </location>
    <ligand>
        <name>ATP</name>
        <dbReference type="ChEBI" id="CHEBI:30616"/>
    </ligand>
</feature>
<name>DNAA_STRAW</name>
<accession>Q82FD8</accession>
<evidence type="ECO:0000255" key="1">
    <source>
        <dbReference type="HAMAP-Rule" id="MF_00377"/>
    </source>
</evidence>
<evidence type="ECO:0000256" key="2">
    <source>
        <dbReference type="SAM" id="MobiDB-lite"/>
    </source>
</evidence>
<sequence length="653" mass="72545">MADVPADLAAVWPRVLEQLLGEGRGQGVEVKDEHWIKRCQPLALVADTALLAVPNEFAKGVLEGRLAPIVSETLSRECGRPIRIAITVDDSAGEPPASASPAPPRYEEPELPSGPGQGRDPYESRGREGYEGYGRHRADDHRQGHNDRHQGGPGDQLPPSRGDQLPTARPAYPDYQRPEPGAWPRPSQDDYGWQQQRLGFPERDPYASPSQDYRPQSMDRPSYDQDRPSYDHDRPSYDHDRPSYEQQRADYDQQRSDYDKRPDRRNIPDSSPGSGHVHRGGPVGSALPASSGAPGPLAAQPAPATGPGEPTARLNPKYLFDTFVIGASNRFAHAAAVAVAEAPAKAYNPLFIYGESGLGKTHLLHAIGHYARSLYPGTRVRYVSSEEFTNEFINSIRDGKGDSFRKRYREMDILLVDDIQFLADKESTQEEFFHTFNTLHNANKQIVLSSDRPPKQLVTLEDRLRNRFEWGLITDVQPPELETRIAILRKKAVQEQLNAPPEVLEFIASRISRNIRELEGALIRVTAFASLNRQPVDLGLTEIVLKDLIPGGEDSAPEITAPAIMAATADYFGLTVEDLCGTSRGRALVTARQIAMYLCRELTDLSLPKIGAQFGGRDHTTVMHADRKIRALMAERRSIYNQVTELTNRIKNG</sequence>
<proteinExistence type="inferred from homology"/>
<dbReference type="EMBL" id="BA000030">
    <property type="protein sequence ID" value="BAC72028.1"/>
    <property type="molecule type" value="Genomic_DNA"/>
</dbReference>
<dbReference type="RefSeq" id="WP_010985741.1">
    <property type="nucleotide sequence ID" value="NZ_JZJK01000079.1"/>
</dbReference>
<dbReference type="SMR" id="Q82FD8"/>
<dbReference type="GeneID" id="41541396"/>
<dbReference type="KEGG" id="sma:SAVERM_4316"/>
<dbReference type="eggNOG" id="COG0593">
    <property type="taxonomic scope" value="Bacteria"/>
</dbReference>
<dbReference type="HOGENOM" id="CLU_026910_2_0_11"/>
<dbReference type="OrthoDB" id="9807019at2"/>
<dbReference type="Proteomes" id="UP000000428">
    <property type="component" value="Chromosome"/>
</dbReference>
<dbReference type="GO" id="GO:0005737">
    <property type="term" value="C:cytoplasm"/>
    <property type="evidence" value="ECO:0007669"/>
    <property type="project" value="UniProtKB-SubCell"/>
</dbReference>
<dbReference type="GO" id="GO:0005886">
    <property type="term" value="C:plasma membrane"/>
    <property type="evidence" value="ECO:0007669"/>
    <property type="project" value="TreeGrafter"/>
</dbReference>
<dbReference type="GO" id="GO:0005524">
    <property type="term" value="F:ATP binding"/>
    <property type="evidence" value="ECO:0007669"/>
    <property type="project" value="UniProtKB-UniRule"/>
</dbReference>
<dbReference type="GO" id="GO:0016887">
    <property type="term" value="F:ATP hydrolysis activity"/>
    <property type="evidence" value="ECO:0007669"/>
    <property type="project" value="InterPro"/>
</dbReference>
<dbReference type="GO" id="GO:0003688">
    <property type="term" value="F:DNA replication origin binding"/>
    <property type="evidence" value="ECO:0007669"/>
    <property type="project" value="UniProtKB-UniRule"/>
</dbReference>
<dbReference type="GO" id="GO:0008289">
    <property type="term" value="F:lipid binding"/>
    <property type="evidence" value="ECO:0007669"/>
    <property type="project" value="UniProtKB-KW"/>
</dbReference>
<dbReference type="GO" id="GO:0006270">
    <property type="term" value="P:DNA replication initiation"/>
    <property type="evidence" value="ECO:0007669"/>
    <property type="project" value="UniProtKB-UniRule"/>
</dbReference>
<dbReference type="GO" id="GO:0006275">
    <property type="term" value="P:regulation of DNA replication"/>
    <property type="evidence" value="ECO:0007669"/>
    <property type="project" value="UniProtKB-UniRule"/>
</dbReference>
<dbReference type="CDD" id="cd00009">
    <property type="entry name" value="AAA"/>
    <property type="match status" value="1"/>
</dbReference>
<dbReference type="CDD" id="cd06571">
    <property type="entry name" value="Bac_DnaA_C"/>
    <property type="match status" value="1"/>
</dbReference>
<dbReference type="FunFam" id="1.10.1750.10:FF:000002">
    <property type="entry name" value="Chromosomal replication initiator protein DnaA"/>
    <property type="match status" value="1"/>
</dbReference>
<dbReference type="FunFam" id="1.10.8.60:FF:000003">
    <property type="entry name" value="Chromosomal replication initiator protein DnaA"/>
    <property type="match status" value="1"/>
</dbReference>
<dbReference type="FunFam" id="3.30.300.180:FF:000004">
    <property type="entry name" value="Chromosomal replication initiator protein DnaA"/>
    <property type="match status" value="1"/>
</dbReference>
<dbReference type="FunFam" id="3.40.50.300:FF:000150">
    <property type="entry name" value="Chromosomal replication initiator protein DnaA"/>
    <property type="match status" value="1"/>
</dbReference>
<dbReference type="Gene3D" id="1.10.1750.10">
    <property type="match status" value="1"/>
</dbReference>
<dbReference type="Gene3D" id="1.10.8.60">
    <property type="match status" value="1"/>
</dbReference>
<dbReference type="Gene3D" id="3.30.300.180">
    <property type="match status" value="1"/>
</dbReference>
<dbReference type="Gene3D" id="3.40.50.300">
    <property type="entry name" value="P-loop containing nucleotide triphosphate hydrolases"/>
    <property type="match status" value="1"/>
</dbReference>
<dbReference type="HAMAP" id="MF_00377">
    <property type="entry name" value="DnaA_bact"/>
    <property type="match status" value="1"/>
</dbReference>
<dbReference type="InterPro" id="IPR003593">
    <property type="entry name" value="AAA+_ATPase"/>
</dbReference>
<dbReference type="InterPro" id="IPR001957">
    <property type="entry name" value="Chromosome_initiator_DnaA"/>
</dbReference>
<dbReference type="InterPro" id="IPR020591">
    <property type="entry name" value="Chromosome_initiator_DnaA-like"/>
</dbReference>
<dbReference type="InterPro" id="IPR018312">
    <property type="entry name" value="Chromosome_initiator_DnaA_CS"/>
</dbReference>
<dbReference type="InterPro" id="IPR013159">
    <property type="entry name" value="DnaA_C"/>
</dbReference>
<dbReference type="InterPro" id="IPR013317">
    <property type="entry name" value="DnaA_dom"/>
</dbReference>
<dbReference type="InterPro" id="IPR038454">
    <property type="entry name" value="DnaA_N_sf"/>
</dbReference>
<dbReference type="InterPro" id="IPR027417">
    <property type="entry name" value="P-loop_NTPase"/>
</dbReference>
<dbReference type="InterPro" id="IPR010921">
    <property type="entry name" value="Trp_repressor/repl_initiator"/>
</dbReference>
<dbReference type="NCBIfam" id="TIGR00362">
    <property type="entry name" value="DnaA"/>
    <property type="match status" value="1"/>
</dbReference>
<dbReference type="NCBIfam" id="NF010686">
    <property type="entry name" value="PRK14086.1"/>
    <property type="match status" value="1"/>
</dbReference>
<dbReference type="PANTHER" id="PTHR30050">
    <property type="entry name" value="CHROMOSOMAL REPLICATION INITIATOR PROTEIN DNAA"/>
    <property type="match status" value="1"/>
</dbReference>
<dbReference type="PANTHER" id="PTHR30050:SF2">
    <property type="entry name" value="CHROMOSOMAL REPLICATION INITIATOR PROTEIN DNAA"/>
    <property type="match status" value="1"/>
</dbReference>
<dbReference type="Pfam" id="PF00308">
    <property type="entry name" value="Bac_DnaA"/>
    <property type="match status" value="1"/>
</dbReference>
<dbReference type="Pfam" id="PF08299">
    <property type="entry name" value="Bac_DnaA_C"/>
    <property type="match status" value="1"/>
</dbReference>
<dbReference type="PRINTS" id="PR00051">
    <property type="entry name" value="DNAA"/>
</dbReference>
<dbReference type="SMART" id="SM00382">
    <property type="entry name" value="AAA"/>
    <property type="match status" value="1"/>
</dbReference>
<dbReference type="SMART" id="SM00760">
    <property type="entry name" value="Bac_DnaA_C"/>
    <property type="match status" value="1"/>
</dbReference>
<dbReference type="SUPFAM" id="SSF52540">
    <property type="entry name" value="P-loop containing nucleoside triphosphate hydrolases"/>
    <property type="match status" value="1"/>
</dbReference>
<dbReference type="SUPFAM" id="SSF48295">
    <property type="entry name" value="TrpR-like"/>
    <property type="match status" value="1"/>
</dbReference>
<dbReference type="PROSITE" id="PS01008">
    <property type="entry name" value="DNAA"/>
    <property type="match status" value="1"/>
</dbReference>
<reference key="1">
    <citation type="journal article" date="2001" name="Proc. Natl. Acad. Sci. U.S.A.">
        <title>Genome sequence of an industrial microorganism Streptomyces avermitilis: deducing the ability of producing secondary metabolites.</title>
        <authorList>
            <person name="Omura S."/>
            <person name="Ikeda H."/>
            <person name="Ishikawa J."/>
            <person name="Hanamoto A."/>
            <person name="Takahashi C."/>
            <person name="Shinose M."/>
            <person name="Takahashi Y."/>
            <person name="Horikawa H."/>
            <person name="Nakazawa H."/>
            <person name="Osonoe T."/>
            <person name="Kikuchi H."/>
            <person name="Shiba T."/>
            <person name="Sakaki Y."/>
            <person name="Hattori M."/>
        </authorList>
    </citation>
    <scope>NUCLEOTIDE SEQUENCE [LARGE SCALE GENOMIC DNA]</scope>
    <source>
        <strain>ATCC 31267 / DSM 46492 / JCM 5070 / NBRC 14893 / NCIMB 12804 / NRRL 8165 / MA-4680</strain>
    </source>
</reference>
<reference key="2">
    <citation type="journal article" date="2003" name="Nat. Biotechnol.">
        <title>Complete genome sequence and comparative analysis of the industrial microorganism Streptomyces avermitilis.</title>
        <authorList>
            <person name="Ikeda H."/>
            <person name="Ishikawa J."/>
            <person name="Hanamoto A."/>
            <person name="Shinose M."/>
            <person name="Kikuchi H."/>
            <person name="Shiba T."/>
            <person name="Sakaki Y."/>
            <person name="Hattori M."/>
            <person name="Omura S."/>
        </authorList>
    </citation>
    <scope>NUCLEOTIDE SEQUENCE [LARGE SCALE GENOMIC DNA]</scope>
    <source>
        <strain>ATCC 31267 / DSM 46492 / JCM 5070 / NBRC 14893 / NCIMB 12804 / NRRL 8165 / MA-4680</strain>
    </source>
</reference>
<keyword id="KW-0067">ATP-binding</keyword>
<keyword id="KW-0963">Cytoplasm</keyword>
<keyword id="KW-0235">DNA replication</keyword>
<keyword id="KW-0238">DNA-binding</keyword>
<keyword id="KW-0446">Lipid-binding</keyword>
<keyword id="KW-0547">Nucleotide-binding</keyword>
<keyword id="KW-1185">Reference proteome</keyword>
<comment type="function">
    <text evidence="1">Plays an essential role in the initiation and regulation of chromosomal replication. ATP-DnaA binds to the origin of replication (oriC) to initiate formation of the DNA replication initiation complex once per cell cycle. Binds the DnaA box (a 9 base pair repeat at the origin) and separates the double-stranded (ds)DNA. Forms a right-handed helical filament on oriC DNA; dsDNA binds to the exterior of the filament while single-stranded (ss)DNA is stabiized in the filament's interior. The ATP-DnaA-oriC complex binds and stabilizes one strand of the AT-rich DNA unwinding element (DUE), permitting loading of DNA polymerase. After initiation quickly degrades to an ADP-DnaA complex that is not apt for DNA replication. Binds acidic phospholipids.</text>
</comment>
<comment type="subunit">
    <text evidence="1">Oligomerizes as a right-handed, spiral filament on DNA at oriC.</text>
</comment>
<comment type="subcellular location">
    <subcellularLocation>
        <location evidence="1">Cytoplasm</location>
    </subcellularLocation>
</comment>
<comment type="domain">
    <text evidence="1">Domain I is involved in oligomerization and binding regulators, domain II is flexibile and of varying length in different bacteria, domain III forms the AAA+ region, while domain IV binds dsDNA.</text>
</comment>
<comment type="similarity">
    <text evidence="1">Belongs to the DnaA family.</text>
</comment>
<organism>
    <name type="scientific">Streptomyces avermitilis (strain ATCC 31267 / DSM 46492 / JCM 5070 / NBRC 14893 / NCIMB 12804 / NRRL 8165 / MA-4680)</name>
    <dbReference type="NCBI Taxonomy" id="227882"/>
    <lineage>
        <taxon>Bacteria</taxon>
        <taxon>Bacillati</taxon>
        <taxon>Actinomycetota</taxon>
        <taxon>Actinomycetes</taxon>
        <taxon>Kitasatosporales</taxon>
        <taxon>Streptomycetaceae</taxon>
        <taxon>Streptomyces</taxon>
    </lineage>
</organism>